<sequence length="295" mass="31804">MTNVTGTERVKRGMAEMQKGGVIMDVINAEQAKIAEEAGAVAIMALERVPADIRAAGGVSRMADPTIVEEVMGAVSIPVMAKCRIGHLVEARVLESLGVDYIDESEVLTPADEVYHLNKRDYTVPFVCGCRDIGEAARRIAEGASMLRTKGEPGTGNIVEAVRHMRQVNAEIRQVASLREDELMTYAKNTGAPYEVLLEIKRLGRLPVVNFAAGGVATPADAALMMQLGADGVFVGSGIFKSENPAKFARAIVEATTHYEDYELIASLSKGLGNAMKGIEISTLLPEQRMQERGW</sequence>
<dbReference type="EC" id="4.3.3.6" evidence="1"/>
<dbReference type="EMBL" id="CP001598">
    <property type="protein sequence ID" value="ACQ50331.1"/>
    <property type="molecule type" value="Genomic_DNA"/>
</dbReference>
<dbReference type="RefSeq" id="WP_000186153.1">
    <property type="nucleotide sequence ID" value="NC_012659.1"/>
</dbReference>
<dbReference type="SMR" id="C3P8Q3"/>
<dbReference type="GeneID" id="45020049"/>
<dbReference type="KEGG" id="bai:BAA_0016"/>
<dbReference type="HOGENOM" id="CLU_055352_1_0_9"/>
<dbReference type="UniPathway" id="UPA00245"/>
<dbReference type="GO" id="GO:0036381">
    <property type="term" value="F:pyridoxal 5'-phosphate synthase (glutamine hydrolysing) activity"/>
    <property type="evidence" value="ECO:0007669"/>
    <property type="project" value="UniProtKB-UniRule"/>
</dbReference>
<dbReference type="GO" id="GO:0006520">
    <property type="term" value="P:amino acid metabolic process"/>
    <property type="evidence" value="ECO:0007669"/>
    <property type="project" value="TreeGrafter"/>
</dbReference>
<dbReference type="GO" id="GO:0042823">
    <property type="term" value="P:pyridoxal phosphate biosynthetic process"/>
    <property type="evidence" value="ECO:0007669"/>
    <property type="project" value="UniProtKB-UniRule"/>
</dbReference>
<dbReference type="GO" id="GO:0008615">
    <property type="term" value="P:pyridoxine biosynthetic process"/>
    <property type="evidence" value="ECO:0007669"/>
    <property type="project" value="TreeGrafter"/>
</dbReference>
<dbReference type="CDD" id="cd04727">
    <property type="entry name" value="pdxS"/>
    <property type="match status" value="1"/>
</dbReference>
<dbReference type="FunFam" id="3.20.20.70:FF:000001">
    <property type="entry name" value="Pyridoxine biosynthesis protein PDX1"/>
    <property type="match status" value="1"/>
</dbReference>
<dbReference type="Gene3D" id="3.20.20.70">
    <property type="entry name" value="Aldolase class I"/>
    <property type="match status" value="1"/>
</dbReference>
<dbReference type="HAMAP" id="MF_01824">
    <property type="entry name" value="PdxS"/>
    <property type="match status" value="1"/>
</dbReference>
<dbReference type="InterPro" id="IPR013785">
    <property type="entry name" value="Aldolase_TIM"/>
</dbReference>
<dbReference type="InterPro" id="IPR001852">
    <property type="entry name" value="PdxS/SNZ"/>
</dbReference>
<dbReference type="InterPro" id="IPR033755">
    <property type="entry name" value="PdxS/SNZ_N"/>
</dbReference>
<dbReference type="InterPro" id="IPR011060">
    <property type="entry name" value="RibuloseP-bd_barrel"/>
</dbReference>
<dbReference type="NCBIfam" id="NF003215">
    <property type="entry name" value="PRK04180.1"/>
    <property type="match status" value="1"/>
</dbReference>
<dbReference type="NCBIfam" id="TIGR00343">
    <property type="entry name" value="pyridoxal 5'-phosphate synthase lyase subunit PdxS"/>
    <property type="match status" value="1"/>
</dbReference>
<dbReference type="PANTHER" id="PTHR31829">
    <property type="entry name" value="PYRIDOXAL 5'-PHOSPHATE SYNTHASE SUBUNIT SNZ1-RELATED"/>
    <property type="match status" value="1"/>
</dbReference>
<dbReference type="PANTHER" id="PTHR31829:SF0">
    <property type="entry name" value="PYRIDOXAL 5'-PHOSPHATE SYNTHASE SUBUNIT SNZ1-RELATED"/>
    <property type="match status" value="1"/>
</dbReference>
<dbReference type="Pfam" id="PF01680">
    <property type="entry name" value="SOR_SNZ"/>
    <property type="match status" value="1"/>
</dbReference>
<dbReference type="PIRSF" id="PIRSF029271">
    <property type="entry name" value="Pdx1"/>
    <property type="match status" value="1"/>
</dbReference>
<dbReference type="SUPFAM" id="SSF51366">
    <property type="entry name" value="Ribulose-phoshate binding barrel"/>
    <property type="match status" value="1"/>
</dbReference>
<dbReference type="PROSITE" id="PS01235">
    <property type="entry name" value="PDXS_SNZ_1"/>
    <property type="match status" value="1"/>
</dbReference>
<dbReference type="PROSITE" id="PS51129">
    <property type="entry name" value="PDXS_SNZ_2"/>
    <property type="match status" value="1"/>
</dbReference>
<reference key="1">
    <citation type="submission" date="2009-04" db="EMBL/GenBank/DDBJ databases">
        <title>Genome sequence of Bacillus anthracis A0248.</title>
        <authorList>
            <person name="Dodson R.J."/>
            <person name="Munk A.C."/>
            <person name="Bruce D."/>
            <person name="Detter C."/>
            <person name="Tapia R."/>
            <person name="Sutton G."/>
            <person name="Sims D."/>
            <person name="Brettin T."/>
        </authorList>
    </citation>
    <scope>NUCLEOTIDE SEQUENCE [LARGE SCALE GENOMIC DNA]</scope>
    <source>
        <strain>A0248</strain>
    </source>
</reference>
<evidence type="ECO:0000255" key="1">
    <source>
        <dbReference type="HAMAP-Rule" id="MF_01824"/>
    </source>
</evidence>
<comment type="function">
    <text evidence="1">Catalyzes the formation of pyridoxal 5'-phosphate from ribose 5-phosphate (RBP), glyceraldehyde 3-phosphate (G3P) and ammonia. The ammonia is provided by the PdxT subunit. Can also use ribulose 5-phosphate and dihydroxyacetone phosphate as substrates, resulting from enzyme-catalyzed isomerization of RBP and G3P, respectively.</text>
</comment>
<comment type="catalytic activity">
    <reaction evidence="1">
        <text>aldehydo-D-ribose 5-phosphate + D-glyceraldehyde 3-phosphate + L-glutamine = pyridoxal 5'-phosphate + L-glutamate + phosphate + 3 H2O + H(+)</text>
        <dbReference type="Rhea" id="RHEA:31507"/>
        <dbReference type="ChEBI" id="CHEBI:15377"/>
        <dbReference type="ChEBI" id="CHEBI:15378"/>
        <dbReference type="ChEBI" id="CHEBI:29985"/>
        <dbReference type="ChEBI" id="CHEBI:43474"/>
        <dbReference type="ChEBI" id="CHEBI:58273"/>
        <dbReference type="ChEBI" id="CHEBI:58359"/>
        <dbReference type="ChEBI" id="CHEBI:59776"/>
        <dbReference type="ChEBI" id="CHEBI:597326"/>
        <dbReference type="EC" id="4.3.3.6"/>
    </reaction>
</comment>
<comment type="pathway">
    <text evidence="1">Cofactor biosynthesis; pyridoxal 5'-phosphate biosynthesis.</text>
</comment>
<comment type="subunit">
    <text evidence="1">In the presence of PdxT, forms a dodecamer of heterodimers.</text>
</comment>
<comment type="similarity">
    <text evidence="1">Belongs to the PdxS/SNZ family.</text>
</comment>
<feature type="chain" id="PRO_1000188204" description="Pyridoxal 5'-phosphate synthase subunit PdxS">
    <location>
        <begin position="1"/>
        <end position="295"/>
    </location>
</feature>
<feature type="active site" description="Schiff-base intermediate with D-ribose 5-phosphate" evidence="1">
    <location>
        <position position="82"/>
    </location>
</feature>
<feature type="binding site" evidence="1">
    <location>
        <position position="25"/>
    </location>
    <ligand>
        <name>D-ribose 5-phosphate</name>
        <dbReference type="ChEBI" id="CHEBI:78346"/>
    </ligand>
</feature>
<feature type="binding site" evidence="1">
    <location>
        <position position="154"/>
    </location>
    <ligand>
        <name>D-ribose 5-phosphate</name>
        <dbReference type="ChEBI" id="CHEBI:78346"/>
    </ligand>
</feature>
<feature type="binding site" evidence="1">
    <location>
        <position position="166"/>
    </location>
    <ligand>
        <name>D-glyceraldehyde 3-phosphate</name>
        <dbReference type="ChEBI" id="CHEBI:59776"/>
    </ligand>
</feature>
<feature type="binding site" evidence="1">
    <location>
        <position position="215"/>
    </location>
    <ligand>
        <name>D-ribose 5-phosphate</name>
        <dbReference type="ChEBI" id="CHEBI:78346"/>
    </ligand>
</feature>
<feature type="binding site" evidence="1">
    <location>
        <begin position="236"/>
        <end position="237"/>
    </location>
    <ligand>
        <name>D-ribose 5-phosphate</name>
        <dbReference type="ChEBI" id="CHEBI:78346"/>
    </ligand>
</feature>
<protein>
    <recommendedName>
        <fullName evidence="1">Pyridoxal 5'-phosphate synthase subunit PdxS</fullName>
        <shortName evidence="1">PLP synthase subunit PdxS</shortName>
        <ecNumber evidence="1">4.3.3.6</ecNumber>
    </recommendedName>
    <alternativeName>
        <fullName evidence="1">Pdx1</fullName>
    </alternativeName>
</protein>
<gene>
    <name evidence="1" type="primary">pdxS</name>
    <name type="ordered locus">BAA_0016</name>
</gene>
<accession>C3P8Q3</accession>
<proteinExistence type="inferred from homology"/>
<keyword id="KW-0456">Lyase</keyword>
<keyword id="KW-0663">Pyridoxal phosphate</keyword>
<keyword id="KW-0704">Schiff base</keyword>
<organism>
    <name type="scientific">Bacillus anthracis (strain A0248)</name>
    <dbReference type="NCBI Taxonomy" id="592021"/>
    <lineage>
        <taxon>Bacteria</taxon>
        <taxon>Bacillati</taxon>
        <taxon>Bacillota</taxon>
        <taxon>Bacilli</taxon>
        <taxon>Bacillales</taxon>
        <taxon>Bacillaceae</taxon>
        <taxon>Bacillus</taxon>
        <taxon>Bacillus cereus group</taxon>
    </lineage>
</organism>
<name>PDXS_BACAA</name>